<evidence type="ECO:0000250" key="1"/>
<evidence type="ECO:0000250" key="2">
    <source>
        <dbReference type="UniProtKB" id="P23064"/>
    </source>
</evidence>
<evidence type="ECO:0000250" key="3">
    <source>
        <dbReference type="UniProtKB" id="P60508"/>
    </source>
</evidence>
<evidence type="ECO:0000250" key="4">
    <source>
        <dbReference type="UniProtKB" id="Q9UQF0"/>
    </source>
</evidence>
<evidence type="ECO:0000255" key="5"/>
<evidence type="ECO:0000269" key="6">
    <source>
    </source>
</evidence>
<evidence type="ECO:0000305" key="7"/>
<comment type="function">
    <text evidence="1">This endogenous retroviral envelope protein has retained its original fusogenic properties and participates in trophoblast fusion and the formation of a syncytium during placenta morphogenesis. The interaction with MFSD2A is apparently important for this process (By similarity).</text>
</comment>
<comment type="function">
    <text evidence="6">Endogenous envelope proteins may have kept, lost or modified their original function during evolution but this one can still make pseudotypes with MLV, HIV-1 or SIV-1 virions and confer infectivity. Retroviral envelope proteins mediate receptor recognition and membrane fusion during early infection. The surface protein mediates receptor recognition, while the transmembrane protein anchors the envelope heterodimer to the viral membrane through one transmembrane domain. The other hydrophobic domain, called fusion peptide, mediates fusion of the viral membrane with the target cell membrane (PubMed:14694139).</text>
</comment>
<comment type="subunit">
    <text evidence="1">The surface and transmembrane proteins form a heterodimer. They are attached by non-covalent interactions or by a labile interchain disulfide bond (By similarity).</text>
</comment>
<comment type="subcellular location">
    <subcellularLocation>
        <location evidence="7">Virion</location>
    </subcellularLocation>
</comment>
<comment type="subcellular location">
    <molecule>Surface protein</molecule>
    <subcellularLocation>
        <location evidence="7">Cell membrane</location>
        <topology evidence="7">Peripheral membrane protein</topology>
    </subcellularLocation>
    <text evidence="4">The surface protein is not anchored to the membrane, but localizes to the extracellular surface through its binding to TM.</text>
</comment>
<comment type="subcellular location">
    <molecule>Transmembrane protein</molecule>
    <subcellularLocation>
        <location evidence="7">Cell membrane</location>
        <topology evidence="5">Single-pass membrane protein</topology>
    </subcellularLocation>
</comment>
<comment type="domain">
    <text evidence="1">The CKS-17 immunosuppressive domain is present in many retroviral envelope proteins. As a synthetic peptide, it inhibits immune function in vitro and in vivo (By similarity).</text>
</comment>
<comment type="PTM">
    <text evidence="1">Specific enzymatic cleavages in vivo yield the mature SU and TM proteins.</text>
</comment>
<comment type="PTM">
    <text evidence="1">The CXXC motif is highly conserved across a broad range of retroviral envelope proteins. It is thought to participate in the formation of a labile disulfide bond possibly with the CX6CC motif present in the transmembrane protein (By similarity).</text>
</comment>
<comment type="miscellaneous">
    <text>Ortholog of the human HERV-FRD_6p24.1 envelope protein.</text>
</comment>
<comment type="miscellaneous">
    <text>The genome contains a high percentage of proviral-like elements, also called endogenous retroviruses (ERVs) that are the genomic traces of ancient infections of the germline by exogenous retroviruses. Although most of these elements are defective, some have conserved a functional envelope (env) gene, most probably diverted by the host for its benefit.</text>
</comment>
<comment type="similarity">
    <text evidence="7">Belongs to the gamma type-C retroviral envelope protein family. HERV class-I FRD env subfamily.</text>
</comment>
<comment type="caution">
    <text evidence="7">CKS-17 sequence does not match the minimal active consensus.</text>
</comment>
<dbReference type="EMBL" id="AJ577599">
    <property type="protein sequence ID" value="CAE12266.1"/>
    <property type="molecule type" value="Genomic_DNA"/>
</dbReference>
<dbReference type="SMR" id="P61556"/>
<dbReference type="STRING" id="9541.ENSMFAP00000012446"/>
<dbReference type="GlyCosmos" id="P61556">
    <property type="glycosylation" value="9 sites, No reported glycans"/>
</dbReference>
<dbReference type="eggNOG" id="ENOG502SD08">
    <property type="taxonomic scope" value="Eukaryota"/>
</dbReference>
<dbReference type="Proteomes" id="UP000233100">
    <property type="component" value="Unplaced"/>
</dbReference>
<dbReference type="GO" id="GO:0005886">
    <property type="term" value="C:plasma membrane"/>
    <property type="evidence" value="ECO:0007669"/>
    <property type="project" value="UniProtKB-SubCell"/>
</dbReference>
<dbReference type="GO" id="GO:0006949">
    <property type="term" value="P:syncytium formation"/>
    <property type="evidence" value="ECO:0000250"/>
    <property type="project" value="UniProtKB"/>
</dbReference>
<dbReference type="GO" id="GO:0000768">
    <property type="term" value="P:syncytium formation by plasma membrane fusion"/>
    <property type="evidence" value="ECO:0000314"/>
    <property type="project" value="UniProtKB"/>
</dbReference>
<dbReference type="CDD" id="cd09851">
    <property type="entry name" value="HTLV-1-like_HR1-HR2"/>
    <property type="match status" value="1"/>
</dbReference>
<dbReference type="FunFam" id="1.10.287.210:FF:000002">
    <property type="entry name" value="Syncytin-2"/>
    <property type="match status" value="1"/>
</dbReference>
<dbReference type="Gene3D" id="1.10.287.210">
    <property type="match status" value="1"/>
</dbReference>
<dbReference type="InterPro" id="IPR018154">
    <property type="entry name" value="TLV/ENV_coat_polyprotein"/>
</dbReference>
<dbReference type="PANTHER" id="PTHR10424:SF85">
    <property type="entry name" value="SYNCYTIN-2"/>
    <property type="match status" value="1"/>
</dbReference>
<dbReference type="PANTHER" id="PTHR10424">
    <property type="entry name" value="VIRAL ENVELOPE PROTEIN"/>
    <property type="match status" value="1"/>
</dbReference>
<dbReference type="Pfam" id="PF00429">
    <property type="entry name" value="TLV_coat"/>
    <property type="match status" value="1"/>
</dbReference>
<dbReference type="SUPFAM" id="SSF58069">
    <property type="entry name" value="Virus ectodomain"/>
    <property type="match status" value="1"/>
</dbReference>
<reference key="1">
    <citation type="journal article" date="2003" name="Proc. Natl. Acad. Sci. U.S.A.">
        <title>Genomewide screening for fusogenic human endogenous retrovirus envelopes identifies syncytin 2, a gene conserved on primate evolution.</title>
        <authorList>
            <person name="Blaise S."/>
            <person name="de Parseval N."/>
            <person name="Benit L."/>
            <person name="Heidmann T."/>
        </authorList>
    </citation>
    <scope>NUCLEOTIDE SEQUENCE [GENOMIC DNA]</scope>
</reference>
<reference key="2">
    <citation type="journal article" date="2004" name="J. Virol.">
        <title>Identification of an envelope protein from the FRD family of human endogenous retroviruses (HERV-FRD) conferring infectivity and functional conservation among simians.</title>
        <authorList>
            <person name="Blaise S."/>
            <person name="Ruggieri A."/>
            <person name="Dewannieux M."/>
            <person name="Cosset F.-L."/>
            <person name="Heidmann T."/>
        </authorList>
    </citation>
    <scope>FUNCTION</scope>
</reference>
<organism>
    <name type="scientific">Macaca fascicularis</name>
    <name type="common">Crab-eating macaque</name>
    <name type="synonym">Cynomolgus monkey</name>
    <dbReference type="NCBI Taxonomy" id="9541"/>
    <lineage>
        <taxon>Eukaryota</taxon>
        <taxon>Metazoa</taxon>
        <taxon>Chordata</taxon>
        <taxon>Craniata</taxon>
        <taxon>Vertebrata</taxon>
        <taxon>Euteleostomi</taxon>
        <taxon>Mammalia</taxon>
        <taxon>Eutheria</taxon>
        <taxon>Euarchontoglires</taxon>
        <taxon>Primates</taxon>
        <taxon>Haplorrhini</taxon>
        <taxon>Catarrhini</taxon>
        <taxon>Cercopithecidae</taxon>
        <taxon>Cercopithecinae</taxon>
        <taxon>Macaca</taxon>
    </lineage>
</organism>
<keyword id="KW-1003">Cell membrane</keyword>
<keyword id="KW-0165">Cleavage on pair of basic residues</keyword>
<keyword id="KW-1015">Disulfide bond</keyword>
<keyword id="KW-0895">ERV</keyword>
<keyword id="KW-0325">Glycoprotein</keyword>
<keyword id="KW-0472">Membrane</keyword>
<keyword id="KW-1185">Reference proteome</keyword>
<keyword id="KW-0732">Signal</keyword>
<keyword id="KW-0812">Transmembrane</keyword>
<keyword id="KW-1133">Transmembrane helix</keyword>
<keyword id="KW-0814">Transposable element</keyword>
<keyword id="KW-0261">Viral envelope protein</keyword>
<keyword id="KW-0946">Virion</keyword>
<feature type="signal peptide" evidence="5">
    <location>
        <begin position="1"/>
        <end position="15"/>
    </location>
</feature>
<feature type="chain" id="PRO_0000008451" description="Syncytin-2">
    <location>
        <begin position="16"/>
        <end position="537"/>
    </location>
</feature>
<feature type="chain" id="PRO_0000008452" description="Surface protein" evidence="1">
    <location>
        <begin position="16"/>
        <end position="350"/>
    </location>
</feature>
<feature type="chain" id="PRO_0000008453" description="Transmembrane protein" evidence="1">
    <location>
        <begin position="351"/>
        <end position="537"/>
    </location>
</feature>
<feature type="topological domain" description="Extracellular" evidence="5">
    <location>
        <begin position="16"/>
        <end position="478"/>
    </location>
</feature>
<feature type="transmembrane region" description="Helical" evidence="5">
    <location>
        <begin position="479"/>
        <end position="499"/>
    </location>
</feature>
<feature type="topological domain" description="Cytoplasmic" evidence="5">
    <location>
        <begin position="500"/>
        <end position="537"/>
    </location>
</feature>
<feature type="region of interest" description="Fusion peptide" evidence="5">
    <location>
        <begin position="354"/>
        <end position="374"/>
    </location>
</feature>
<feature type="short sequence motif" description="CXXC" evidence="7">
    <location>
        <begin position="43"/>
        <end position="46"/>
    </location>
</feature>
<feature type="short sequence motif" description="CKS-17" evidence="1">
    <location>
        <begin position="414"/>
        <end position="430"/>
    </location>
</feature>
<feature type="short sequence motif" description="CX6CC" evidence="7">
    <location>
        <begin position="431"/>
        <end position="439"/>
    </location>
</feature>
<feature type="site" description="Cleavage" evidence="4">
    <location>
        <begin position="350"/>
        <end position="351"/>
    </location>
</feature>
<feature type="glycosylation site" description="N-linked (GlcNAc...) asparagine" evidence="5">
    <location>
        <position position="133"/>
    </location>
</feature>
<feature type="glycosylation site" description="N-linked (GlcNAc...) asparagine" evidence="5">
    <location>
        <position position="146"/>
    </location>
</feature>
<feature type="glycosylation site" description="N-linked (GlcNAc...) asparagine" evidence="5">
    <location>
        <position position="177"/>
    </location>
</feature>
<feature type="glycosylation site" description="N-linked (GlcNAc...) asparagine" evidence="5">
    <location>
        <position position="220"/>
    </location>
</feature>
<feature type="glycosylation site" description="N-linked (GlcNAc...) asparagine" evidence="5">
    <location>
        <position position="241"/>
    </location>
</feature>
<feature type="glycosylation site" description="N-linked (GlcNAc...) asparagine" evidence="5">
    <location>
        <position position="247"/>
    </location>
</feature>
<feature type="glycosylation site" description="N-linked (GlcNAc...) asparagine" evidence="5">
    <location>
        <position position="312"/>
    </location>
</feature>
<feature type="glycosylation site" description="N-linked (GlcNAc...) asparagine" evidence="5">
    <location>
        <position position="332"/>
    </location>
</feature>
<feature type="glycosylation site" description="N-linked (GlcNAc...) asparagine" evidence="5">
    <location>
        <position position="443"/>
    </location>
</feature>
<feature type="disulfide bond" description="Interchain (between SU and TM chains, or C-46 with C-439); in linked form" evidence="4">
    <location>
        <begin position="43"/>
        <end position="439"/>
    </location>
</feature>
<feature type="disulfide bond" evidence="2">
    <location>
        <begin position="43"/>
        <end position="46"/>
    </location>
</feature>
<feature type="disulfide bond" evidence="3">
    <location>
        <begin position="431"/>
        <end position="438"/>
    </location>
</feature>
<name>SYCY2_MACFA</name>
<proteinExistence type="inferred from homology"/>
<sequence length="537" mass="59494">MGLLLLVLILTPLLAAYRHPDFPLLEKAQQLLQSTGSPYSTNCWLCTSSSTETPGTAYPASPREWTSIEAELHISYQWDPNLKGLMTPANSLLSTVKQDFPDIRQKPPIFGPIFTNINLMGKAPICVTAKRKNGTNVGTLPSTVCNVTFTVDPNQQTYQTYTHNQFRHQPRFPKPPNITFPQGTLLDKSTQFCQGRPSSCRTRNFWFRPADYNQCLQIPNLSSPAEWVLLDQTRNSLFWENKTKGANQSQTPCIQVLAGMTIATSYLGISPVSEFFGTSLTPLFHFHISTCLKTQGAFYICGQSIHQCLPTNWTGTCTIGYVTPDIFIAPGNLSLPIPIYGNSQLPRARRAIHFIPLLAGLGILAGTGTGIAGITKASFTYSQLSKEIAKNIDTMAKTLTTVQEQIDSLAAVVLQNRRGLDMLTAAQGGICLALDEKCCFWVNQSGKVQDNIRQLLNQASSLRERATQGWLNWEGTWKWFSWVLPFIGPLVSLLLLLLFGPCLLNLITQFVSSRLQAIKLQTNGAGCRPRNIQESPF</sequence>
<accession>P61556</accession>
<gene>
    <name type="primary">ERVFRD-1</name>
    <name type="synonym">ERVFRDE1</name>
</gene>
<protein>
    <recommendedName>
        <fullName>Syncytin-2</fullName>
    </recommendedName>
    <alternativeName>
        <fullName>ERV-FRD provirus ancestral Env polyprotein</fullName>
    </alternativeName>
    <alternativeName>
        <fullName>Envelope polyprotein</fullName>
    </alternativeName>
    <component>
        <recommendedName>
            <fullName>Surface protein</fullName>
            <shortName>SU</shortName>
        </recommendedName>
    </component>
    <component>
        <recommendedName>
            <fullName>Transmembrane protein</fullName>
            <shortName>TM</shortName>
        </recommendedName>
    </component>
</protein>